<evidence type="ECO:0000255" key="1">
    <source>
        <dbReference type="HAMAP-Rule" id="MF_00412"/>
    </source>
</evidence>
<protein>
    <recommendedName>
        <fullName evidence="1">Gamma-glutamyl phosphate reductase</fullName>
        <shortName evidence="1">GPR</shortName>
        <ecNumber evidence="1">1.2.1.41</ecNumber>
    </recommendedName>
    <alternativeName>
        <fullName evidence="1">Glutamate-5-semialdehyde dehydrogenase</fullName>
    </alternativeName>
    <alternativeName>
        <fullName evidence="1">Glutamyl-gamma-semialdehyde dehydrogenase</fullName>
        <shortName evidence="1">GSA dehydrogenase</shortName>
    </alternativeName>
</protein>
<gene>
    <name evidence="1" type="primary">proA</name>
</gene>
<comment type="function">
    <text evidence="1">Catalyzes the NADPH-dependent reduction of L-glutamate 5-phosphate into L-glutamate 5-semialdehyde and phosphate. The product spontaneously undergoes cyclization to form 1-pyrroline-5-carboxylate.</text>
</comment>
<comment type="catalytic activity">
    <reaction evidence="1">
        <text>L-glutamate 5-semialdehyde + phosphate + NADP(+) = L-glutamyl 5-phosphate + NADPH + H(+)</text>
        <dbReference type="Rhea" id="RHEA:19541"/>
        <dbReference type="ChEBI" id="CHEBI:15378"/>
        <dbReference type="ChEBI" id="CHEBI:43474"/>
        <dbReference type="ChEBI" id="CHEBI:57783"/>
        <dbReference type="ChEBI" id="CHEBI:58066"/>
        <dbReference type="ChEBI" id="CHEBI:58274"/>
        <dbReference type="ChEBI" id="CHEBI:58349"/>
        <dbReference type="EC" id="1.2.1.41"/>
    </reaction>
</comment>
<comment type="pathway">
    <text evidence="1">Amino-acid biosynthesis; L-proline biosynthesis; L-glutamate 5-semialdehyde from L-glutamate: step 2/2.</text>
</comment>
<comment type="subcellular location">
    <subcellularLocation>
        <location evidence="1">Cytoplasm</location>
    </subcellularLocation>
</comment>
<comment type="similarity">
    <text evidence="1">Belongs to the gamma-glutamyl phosphate reductase family.</text>
</comment>
<proteinExistence type="inferred from homology"/>
<feature type="chain" id="PRO_0000189794" description="Gamma-glutamyl phosphate reductase">
    <location>
        <begin position="1"/>
        <end position="416"/>
    </location>
</feature>
<name>PROA_STRTR</name>
<keyword id="KW-0028">Amino-acid biosynthesis</keyword>
<keyword id="KW-0963">Cytoplasm</keyword>
<keyword id="KW-0521">NADP</keyword>
<keyword id="KW-0560">Oxidoreductase</keyword>
<keyword id="KW-0641">Proline biosynthesis</keyword>
<organism>
    <name type="scientific">Streptococcus thermophilus</name>
    <dbReference type="NCBI Taxonomy" id="1308"/>
    <lineage>
        <taxon>Bacteria</taxon>
        <taxon>Bacillati</taxon>
        <taxon>Bacillota</taxon>
        <taxon>Bacilli</taxon>
        <taxon>Lactobacillales</taxon>
        <taxon>Streptococcaceae</taxon>
        <taxon>Streptococcus</taxon>
    </lineage>
</organism>
<dbReference type="EC" id="1.2.1.41" evidence="1"/>
<dbReference type="EMBL" id="X92418">
    <property type="protein sequence ID" value="CAA63148.1"/>
    <property type="molecule type" value="Genomic_DNA"/>
</dbReference>
<dbReference type="SMR" id="P96489"/>
<dbReference type="eggNOG" id="COG0014">
    <property type="taxonomic scope" value="Bacteria"/>
</dbReference>
<dbReference type="UniPathway" id="UPA00098">
    <property type="reaction ID" value="UER00360"/>
</dbReference>
<dbReference type="GO" id="GO:0005737">
    <property type="term" value="C:cytoplasm"/>
    <property type="evidence" value="ECO:0007669"/>
    <property type="project" value="UniProtKB-SubCell"/>
</dbReference>
<dbReference type="GO" id="GO:0004350">
    <property type="term" value="F:glutamate-5-semialdehyde dehydrogenase activity"/>
    <property type="evidence" value="ECO:0007669"/>
    <property type="project" value="UniProtKB-UniRule"/>
</dbReference>
<dbReference type="GO" id="GO:0050661">
    <property type="term" value="F:NADP binding"/>
    <property type="evidence" value="ECO:0007669"/>
    <property type="project" value="InterPro"/>
</dbReference>
<dbReference type="GO" id="GO:0055129">
    <property type="term" value="P:L-proline biosynthetic process"/>
    <property type="evidence" value="ECO:0007669"/>
    <property type="project" value="UniProtKB-UniRule"/>
</dbReference>
<dbReference type="CDD" id="cd07079">
    <property type="entry name" value="ALDH_F18-19_ProA-GPR"/>
    <property type="match status" value="1"/>
</dbReference>
<dbReference type="FunFam" id="3.40.309.10:FF:000006">
    <property type="entry name" value="Gamma-glutamyl phosphate reductase"/>
    <property type="match status" value="1"/>
</dbReference>
<dbReference type="Gene3D" id="3.40.605.10">
    <property type="entry name" value="Aldehyde Dehydrogenase, Chain A, domain 1"/>
    <property type="match status" value="1"/>
</dbReference>
<dbReference type="Gene3D" id="3.40.309.10">
    <property type="entry name" value="Aldehyde Dehydrogenase, Chain A, domain 2"/>
    <property type="match status" value="1"/>
</dbReference>
<dbReference type="HAMAP" id="MF_00412">
    <property type="entry name" value="ProA"/>
    <property type="match status" value="1"/>
</dbReference>
<dbReference type="InterPro" id="IPR016161">
    <property type="entry name" value="Ald_DH/histidinol_DH"/>
</dbReference>
<dbReference type="InterPro" id="IPR016163">
    <property type="entry name" value="Ald_DH_C"/>
</dbReference>
<dbReference type="InterPro" id="IPR016162">
    <property type="entry name" value="Ald_DH_N"/>
</dbReference>
<dbReference type="InterPro" id="IPR015590">
    <property type="entry name" value="Aldehyde_DH_dom"/>
</dbReference>
<dbReference type="InterPro" id="IPR020593">
    <property type="entry name" value="G-glutamylP_reductase_CS"/>
</dbReference>
<dbReference type="InterPro" id="IPR012134">
    <property type="entry name" value="Glu-5-SA_DH"/>
</dbReference>
<dbReference type="InterPro" id="IPR000965">
    <property type="entry name" value="GPR_dom"/>
</dbReference>
<dbReference type="NCBIfam" id="NF001221">
    <property type="entry name" value="PRK00197.1"/>
    <property type="match status" value="1"/>
</dbReference>
<dbReference type="NCBIfam" id="TIGR00407">
    <property type="entry name" value="proA"/>
    <property type="match status" value="1"/>
</dbReference>
<dbReference type="PANTHER" id="PTHR11063:SF8">
    <property type="entry name" value="DELTA-1-PYRROLINE-5-CARBOXYLATE SYNTHASE"/>
    <property type="match status" value="1"/>
</dbReference>
<dbReference type="PANTHER" id="PTHR11063">
    <property type="entry name" value="GLUTAMATE SEMIALDEHYDE DEHYDROGENASE"/>
    <property type="match status" value="1"/>
</dbReference>
<dbReference type="Pfam" id="PF00171">
    <property type="entry name" value="Aldedh"/>
    <property type="match status" value="2"/>
</dbReference>
<dbReference type="PIRSF" id="PIRSF000151">
    <property type="entry name" value="GPR"/>
    <property type="match status" value="1"/>
</dbReference>
<dbReference type="SUPFAM" id="SSF53720">
    <property type="entry name" value="ALDH-like"/>
    <property type="match status" value="1"/>
</dbReference>
<dbReference type="PROSITE" id="PS01223">
    <property type="entry name" value="PROA"/>
    <property type="match status" value="1"/>
</dbReference>
<accession>P96489</accession>
<reference key="1">
    <citation type="journal article" date="1996" name="Microbiology">
        <title>Proline biosynthesis in Streptococcus thermophilus: characterization of the proBA operon and its products.</title>
        <authorList>
            <person name="Limauro D."/>
            <person name="Falciatore A."/>
            <person name="Basso A.L."/>
            <person name="Forlani G."/>
            <person name="de Felice M."/>
        </authorList>
    </citation>
    <scope>NUCLEOTIDE SEQUENCE [GENOMIC DNA]</scope>
    <source>
        <strain>ATCC 19258 / DSM 20617 / LMG 6896 / NCDO 573 / NCIMB 8510</strain>
    </source>
</reference>
<sequence length="416" mass="45390">MTYVDTLGQQAKVASRQIAKLSTAAKNDLLNQVAKALVAESDYIFTENAKDMANASENGISKIMQDRLLLTEDRIAGIAEGVRQVADLQDPIGQVVRGYTNLDGLKIVQKRVPMGVIAMIFESRPNVSIDAFSLAFKTNNAIILRGGRDAINSNKALVTVARKALKNAGITADAVQFVEDTSHEVAEELMVATKYVDLLIPRGGARLIQTVKEKAKVPVIETGVGNCHIYVDKYANLDMATQIVINAKTQRPSVCNAAESLVVHADIVEEFLPNLEKAISKIQSVEFRADERALKLMEKAVPASPEDFATEFLDYIMSVKVVDSLDEAINWINTYTTSHSEAIVTQDISRAEQFQDDVDAAAVYVNASTRFTDGFVFGLGAEIGISTQKMHARGPMGLEALTSTKFYINGQGQIRE</sequence>